<evidence type="ECO:0000250" key="1"/>
<evidence type="ECO:0000255" key="2"/>
<evidence type="ECO:0000255" key="3">
    <source>
        <dbReference type="PROSITE-ProRule" id="PRU00102"/>
    </source>
</evidence>
<evidence type="ECO:0000255" key="4">
    <source>
        <dbReference type="PROSITE-ProRule" id="PRU00284"/>
    </source>
</evidence>
<evidence type="ECO:0000256" key="5">
    <source>
        <dbReference type="SAM" id="MobiDB-lite"/>
    </source>
</evidence>
<evidence type="ECO:0000305" key="6"/>
<name>MCPA_CAUVC</name>
<feature type="chain" id="PRO_0000110545" description="Chemoreceptor McpA">
    <location>
        <begin position="1"/>
        <end position="657"/>
    </location>
</feature>
<feature type="topological domain" description="Cytoplasmic" evidence="2">
    <location>
        <begin position="1"/>
        <end position="5"/>
    </location>
</feature>
<feature type="transmembrane region" description="Helical" evidence="2">
    <location>
        <begin position="6"/>
        <end position="29"/>
    </location>
</feature>
<feature type="topological domain" description="Periplasmic" evidence="2">
    <location>
        <begin position="30"/>
        <end position="188"/>
    </location>
</feature>
<feature type="transmembrane region" description="Helical" evidence="2">
    <location>
        <begin position="189"/>
        <end position="212"/>
    </location>
</feature>
<feature type="topological domain" description="Cytoplasmic" evidence="2">
    <location>
        <begin position="213"/>
        <end position="657"/>
    </location>
</feature>
<feature type="domain" description="HAMP 1" evidence="3">
    <location>
        <begin position="216"/>
        <end position="269"/>
    </location>
</feature>
<feature type="domain" description="HAMP 2" evidence="3">
    <location>
        <begin position="297"/>
        <end position="349"/>
    </location>
</feature>
<feature type="domain" description="Methyl-accepting transducer" evidence="4">
    <location>
        <begin position="354"/>
        <end position="583"/>
    </location>
</feature>
<feature type="region of interest" description="Disordered" evidence="5">
    <location>
        <begin position="634"/>
        <end position="657"/>
    </location>
</feature>
<feature type="modified residue" description="Glutamate methyl ester (Gln)" evidence="1">
    <location>
        <position position="378"/>
    </location>
</feature>
<feature type="modified residue" description="Glutamate methyl ester (Glu)" evidence="1">
    <location>
        <position position="385"/>
    </location>
</feature>
<feature type="modified residue" description="Glutamate methyl ester (Glu)" evidence="1">
    <location>
        <position position="392"/>
    </location>
</feature>
<feature type="modified residue" description="Glutamate methyl ester (Gln)" evidence="1">
    <location>
        <position position="574"/>
    </location>
</feature>
<reference key="1">
    <citation type="journal article" date="1992" name="Genes Dev.">
        <title>Polar localization of a bacterial chemoreceptor.</title>
        <authorList>
            <person name="Alley M.R.K."/>
            <person name="Maddock J.R."/>
            <person name="Shapiro L."/>
        </authorList>
    </citation>
    <scope>NUCLEOTIDE SEQUENCE [GENOMIC DNA]</scope>
    <source>
        <strain>ATCC 19089 / CIP 103742 / CB 15</strain>
    </source>
</reference>
<reference key="2">
    <citation type="journal article" date="2001" name="Proc. Natl. Acad. Sci. U.S.A.">
        <title>Complete genome sequence of Caulobacter crescentus.</title>
        <authorList>
            <person name="Nierman W.C."/>
            <person name="Feldblyum T.V."/>
            <person name="Laub M.T."/>
            <person name="Paulsen I.T."/>
            <person name="Nelson K.E."/>
            <person name="Eisen J.A."/>
            <person name="Heidelberg J.F."/>
            <person name="Alley M.R.K."/>
            <person name="Ohta N."/>
            <person name="Maddock J.R."/>
            <person name="Potocka I."/>
            <person name="Nelson W.C."/>
            <person name="Newton A."/>
            <person name="Stephens C."/>
            <person name="Phadke N.D."/>
            <person name="Ely B."/>
            <person name="DeBoy R.T."/>
            <person name="Dodson R.J."/>
            <person name="Durkin A.S."/>
            <person name="Gwinn M.L."/>
            <person name="Haft D.H."/>
            <person name="Kolonay J.F."/>
            <person name="Smit J."/>
            <person name="Craven M.B."/>
            <person name="Khouri H.M."/>
            <person name="Shetty J."/>
            <person name="Berry K.J."/>
            <person name="Utterback T.R."/>
            <person name="Tran K."/>
            <person name="Wolf A.M."/>
            <person name="Vamathevan J.J."/>
            <person name="Ermolaeva M.D."/>
            <person name="White O."/>
            <person name="Salzberg S.L."/>
            <person name="Venter J.C."/>
            <person name="Shapiro L."/>
            <person name="Fraser C.M."/>
        </authorList>
    </citation>
    <scope>NUCLEOTIDE SEQUENCE [LARGE SCALE GENOMIC DNA]</scope>
    <source>
        <strain>ATCC 19089 / CIP 103742 / CB 15</strain>
    </source>
</reference>
<proteinExistence type="inferred from homology"/>
<comment type="function">
    <text>Chemotactic-signal transducers respond to changes in the concentration of attractants and repellents in the environment, transduce a signal from the outside to the inside of the cell, and facilitate sensory adaptation through the variation of the level of methylation. Attractants increase the level of methylation while repellents decrease the level of methylation.</text>
</comment>
<comment type="subcellular location">
    <subcellularLocation>
        <location>Cell membrane</location>
        <topology>Multi-pass membrane protein</topology>
    </subcellularLocation>
    <text>Localized at the flagellum-bearing pole of the swarmer cell.</text>
</comment>
<comment type="similarity">
    <text evidence="6">Belongs to the methyl-accepting chemotaxis (MCP) protein family.</text>
</comment>
<gene>
    <name type="primary">mcpA</name>
    <name type="ordered locus">CC_0430</name>
</gene>
<accession>Q00986</accession>
<sequence>MKRIRLVDLPLIIKIGFAPAFALLMLAVMAGGAILVQKSQSAALKQVVERDMRQNLEIQRISKRISNINGELFVVMTHKAGNIDVDKNDARMAAVLVETDAVKKDLLALKSKLPAEEQPKIAELIKSLEECRSAIDTVSGMISVDFNMAAGFIAPFEEQYVKMTGQLDQVVAAANQRIESESAKRQAQATAAMSVTIIMSLLTLGAVGALAFLTVMTTRKSINDIAAATDKLSKGDNSIDLEKMTRGDELGGIVTALKVFRDNQVHLEQLRADQEKSAALTADERRSKEAAAAAAAQEASLVVSNLAEGLEKLASGDLTFRVTADFPGDYRKLKDDFNAAMGSLQETMKVIAASTDGLSTGADEIAHASDDLSRRTEQQAASLEETAAALDELTATVRRTAAGARQASDVVSTTRGEATHSGQVVHQAVSAMGEIEKSSGQISQIIGVIDEIAFQTNLLALNAGVEAARAGEAGRGFAVVAQEVRALAQRSAEAAKEIKALISSSTQQVSQGVSLVGQTGEALQRIVTKVGEIDALVTEIAASAAEQATGLNEVNTAVNQMDQVTQQNAAMVEQSTAATHSLKGETAELVRLMARFQVGSGSSSYARPAVADAGHHAPARNPVAEQQARLNTFARPGRSSGSAALAQAPASDGWEEF</sequence>
<dbReference type="EMBL" id="X66502">
    <property type="protein sequence ID" value="CAA47122.1"/>
    <property type="molecule type" value="Genomic_DNA"/>
</dbReference>
<dbReference type="EMBL" id="AE005673">
    <property type="protein sequence ID" value="AAK22417.1"/>
    <property type="molecule type" value="Genomic_DNA"/>
</dbReference>
<dbReference type="PIR" id="S23064">
    <property type="entry name" value="S23064"/>
</dbReference>
<dbReference type="RefSeq" id="NP_419249.1">
    <property type="nucleotide sequence ID" value="NC_002696.2"/>
</dbReference>
<dbReference type="SMR" id="Q00986"/>
<dbReference type="STRING" id="190650.CC_0430"/>
<dbReference type="EnsemblBacteria" id="AAK22417">
    <property type="protein sequence ID" value="AAK22417"/>
    <property type="gene ID" value="CC_0430"/>
</dbReference>
<dbReference type="KEGG" id="ccr:CC_0430"/>
<dbReference type="PATRIC" id="fig|190650.5.peg.435"/>
<dbReference type="eggNOG" id="COG0840">
    <property type="taxonomic scope" value="Bacteria"/>
</dbReference>
<dbReference type="HOGENOM" id="CLU_000445_107_20_5"/>
<dbReference type="BioCyc" id="CAULO:CC0430-MONOMER"/>
<dbReference type="CD-CODE" id="907141DD">
    <property type="entry name" value="PopZ condensate"/>
</dbReference>
<dbReference type="Proteomes" id="UP000001816">
    <property type="component" value="Chromosome"/>
</dbReference>
<dbReference type="GO" id="GO:0005886">
    <property type="term" value="C:plasma membrane"/>
    <property type="evidence" value="ECO:0007669"/>
    <property type="project" value="UniProtKB-SubCell"/>
</dbReference>
<dbReference type="GO" id="GO:0004888">
    <property type="term" value="F:transmembrane signaling receptor activity"/>
    <property type="evidence" value="ECO:0007669"/>
    <property type="project" value="InterPro"/>
</dbReference>
<dbReference type="GO" id="GO:0006935">
    <property type="term" value="P:chemotaxis"/>
    <property type="evidence" value="ECO:0007669"/>
    <property type="project" value="UniProtKB-KW"/>
</dbReference>
<dbReference type="GO" id="GO:0007165">
    <property type="term" value="P:signal transduction"/>
    <property type="evidence" value="ECO:0007669"/>
    <property type="project" value="InterPro"/>
</dbReference>
<dbReference type="CDD" id="cd11386">
    <property type="entry name" value="MCP_signal"/>
    <property type="match status" value="1"/>
</dbReference>
<dbReference type="FunFam" id="1.10.287.950:FF:000001">
    <property type="entry name" value="Methyl-accepting chemotaxis sensory transducer"/>
    <property type="match status" value="1"/>
</dbReference>
<dbReference type="Gene3D" id="6.10.340.10">
    <property type="match status" value="1"/>
</dbReference>
<dbReference type="Gene3D" id="1.10.287.950">
    <property type="entry name" value="Methyl-accepting chemotaxis protein"/>
    <property type="match status" value="1"/>
</dbReference>
<dbReference type="InterPro" id="IPR004090">
    <property type="entry name" value="Chemotax_Me-accpt_rcpt"/>
</dbReference>
<dbReference type="InterPro" id="IPR003660">
    <property type="entry name" value="HAMP_dom"/>
</dbReference>
<dbReference type="InterPro" id="IPR051310">
    <property type="entry name" value="MCP_chemotaxis"/>
</dbReference>
<dbReference type="InterPro" id="IPR004089">
    <property type="entry name" value="MCPsignal_dom"/>
</dbReference>
<dbReference type="PANTHER" id="PTHR43531:SF11">
    <property type="entry name" value="METHYL-ACCEPTING CHEMOTAXIS PROTEIN 3"/>
    <property type="match status" value="1"/>
</dbReference>
<dbReference type="PANTHER" id="PTHR43531">
    <property type="entry name" value="PROTEIN ICFG"/>
    <property type="match status" value="1"/>
</dbReference>
<dbReference type="Pfam" id="PF00672">
    <property type="entry name" value="HAMP"/>
    <property type="match status" value="1"/>
</dbReference>
<dbReference type="Pfam" id="PF00015">
    <property type="entry name" value="MCPsignal"/>
    <property type="match status" value="1"/>
</dbReference>
<dbReference type="PRINTS" id="PR00260">
    <property type="entry name" value="CHEMTRNSDUCR"/>
</dbReference>
<dbReference type="SMART" id="SM00304">
    <property type="entry name" value="HAMP"/>
    <property type="match status" value="2"/>
</dbReference>
<dbReference type="SMART" id="SM00283">
    <property type="entry name" value="MA"/>
    <property type="match status" value="1"/>
</dbReference>
<dbReference type="SUPFAM" id="SSF58104">
    <property type="entry name" value="Methyl-accepting chemotaxis protein (MCP) signaling domain"/>
    <property type="match status" value="1"/>
</dbReference>
<dbReference type="PROSITE" id="PS50111">
    <property type="entry name" value="CHEMOTAXIS_TRANSDUC_2"/>
    <property type="match status" value="1"/>
</dbReference>
<dbReference type="PROSITE" id="PS50885">
    <property type="entry name" value="HAMP"/>
    <property type="match status" value="2"/>
</dbReference>
<protein>
    <recommendedName>
        <fullName>Chemoreceptor McpA</fullName>
    </recommendedName>
    <alternativeName>
        <fullName>Methyl-accepting chemotaxis protein</fullName>
    </alternativeName>
</protein>
<keyword id="KW-1003">Cell membrane</keyword>
<keyword id="KW-0145">Chemotaxis</keyword>
<keyword id="KW-0472">Membrane</keyword>
<keyword id="KW-0488">Methylation</keyword>
<keyword id="KW-0675">Receptor</keyword>
<keyword id="KW-1185">Reference proteome</keyword>
<keyword id="KW-0677">Repeat</keyword>
<keyword id="KW-0812">Transmembrane</keyword>
<keyword id="KW-1133">Transmembrane helix</keyword>
<organism>
    <name type="scientific">Caulobacter vibrioides (strain ATCC 19089 / CIP 103742 / CB 15)</name>
    <name type="common">Caulobacter crescentus</name>
    <dbReference type="NCBI Taxonomy" id="190650"/>
    <lineage>
        <taxon>Bacteria</taxon>
        <taxon>Pseudomonadati</taxon>
        <taxon>Pseudomonadota</taxon>
        <taxon>Alphaproteobacteria</taxon>
        <taxon>Caulobacterales</taxon>
        <taxon>Caulobacteraceae</taxon>
        <taxon>Caulobacter</taxon>
    </lineage>
</organism>